<proteinExistence type="inferred from homology"/>
<accession>Q58048</accession>
<gene>
    <name type="ordered locus">MJ0631</name>
</gene>
<organism>
    <name type="scientific">Methanocaldococcus jannaschii (strain ATCC 43067 / DSM 2661 / JAL-1 / JCM 10045 / NBRC 100440)</name>
    <name type="common">Methanococcus jannaschii</name>
    <dbReference type="NCBI Taxonomy" id="243232"/>
    <lineage>
        <taxon>Archaea</taxon>
        <taxon>Methanobacteriati</taxon>
        <taxon>Methanobacteriota</taxon>
        <taxon>Methanomada group</taxon>
        <taxon>Methanococci</taxon>
        <taxon>Methanococcales</taxon>
        <taxon>Methanocaldococcaceae</taxon>
        <taxon>Methanocaldococcus</taxon>
    </lineage>
</organism>
<evidence type="ECO:0000305" key="1"/>
<reference key="1">
    <citation type="journal article" date="1996" name="Science">
        <title>Complete genome sequence of the methanogenic archaeon, Methanococcus jannaschii.</title>
        <authorList>
            <person name="Bult C.J."/>
            <person name="White O."/>
            <person name="Olsen G.J."/>
            <person name="Zhou L."/>
            <person name="Fleischmann R.D."/>
            <person name="Sutton G.G."/>
            <person name="Blake J.A."/>
            <person name="FitzGerald L.M."/>
            <person name="Clayton R.A."/>
            <person name="Gocayne J.D."/>
            <person name="Kerlavage A.R."/>
            <person name="Dougherty B.A."/>
            <person name="Tomb J.-F."/>
            <person name="Adams M.D."/>
            <person name="Reich C.I."/>
            <person name="Overbeek R."/>
            <person name="Kirkness E.F."/>
            <person name="Weinstock K.G."/>
            <person name="Merrick J.M."/>
            <person name="Glodek A."/>
            <person name="Scott J.L."/>
            <person name="Geoghagen N.S.M."/>
            <person name="Weidman J.F."/>
            <person name="Fuhrmann J.L."/>
            <person name="Nguyen D."/>
            <person name="Utterback T.R."/>
            <person name="Kelley J.M."/>
            <person name="Peterson J.D."/>
            <person name="Sadow P.W."/>
            <person name="Hanna M.C."/>
            <person name="Cotton M.D."/>
            <person name="Roberts K.M."/>
            <person name="Hurst M.A."/>
            <person name="Kaine B.P."/>
            <person name="Borodovsky M."/>
            <person name="Klenk H.-P."/>
            <person name="Fraser C.M."/>
            <person name="Smith H.O."/>
            <person name="Woese C.R."/>
            <person name="Venter J.C."/>
        </authorList>
    </citation>
    <scope>NUCLEOTIDE SEQUENCE [LARGE SCALE GENOMIC DNA]</scope>
    <source>
        <strain>ATCC 43067 / DSM 2661 / JAL-1 / JCM 10045 / NBRC 100440</strain>
    </source>
</reference>
<comment type="similarity">
    <text evidence="1">Belongs to the peptidase A31 family.</text>
</comment>
<dbReference type="EC" id="3.4.23.-"/>
<dbReference type="EMBL" id="L77117">
    <property type="protein sequence ID" value="AAB98623.1"/>
    <property type="molecule type" value="Genomic_DNA"/>
</dbReference>
<dbReference type="PIR" id="G64378">
    <property type="entry name" value="G64378"/>
</dbReference>
<dbReference type="RefSeq" id="WP_010870136.1">
    <property type="nucleotide sequence ID" value="NC_000909.1"/>
</dbReference>
<dbReference type="SMR" id="Q58048"/>
<dbReference type="STRING" id="243232.MJ_0631"/>
<dbReference type="MEROPS" id="A31.003"/>
<dbReference type="PaxDb" id="243232-MJ_0631"/>
<dbReference type="EnsemblBacteria" id="AAB98623">
    <property type="protein sequence ID" value="AAB98623"/>
    <property type="gene ID" value="MJ_0631"/>
</dbReference>
<dbReference type="GeneID" id="1451497"/>
<dbReference type="KEGG" id="mja:MJ_0631"/>
<dbReference type="eggNOG" id="arCOG04429">
    <property type="taxonomic scope" value="Archaea"/>
</dbReference>
<dbReference type="HOGENOM" id="CLU_099037_4_1_2"/>
<dbReference type="InParanoid" id="Q58048"/>
<dbReference type="OrthoDB" id="44145at2157"/>
<dbReference type="PhylomeDB" id="Q58048"/>
<dbReference type="Proteomes" id="UP000000805">
    <property type="component" value="Chromosome"/>
</dbReference>
<dbReference type="GO" id="GO:0004190">
    <property type="term" value="F:aspartic-type endopeptidase activity"/>
    <property type="evidence" value="ECO:0007669"/>
    <property type="project" value="UniProtKB-KW"/>
</dbReference>
<dbReference type="GO" id="GO:0004175">
    <property type="term" value="F:endopeptidase activity"/>
    <property type="evidence" value="ECO:0000318"/>
    <property type="project" value="GO_Central"/>
</dbReference>
<dbReference type="GO" id="GO:0008047">
    <property type="term" value="F:enzyme activator activity"/>
    <property type="evidence" value="ECO:0007669"/>
    <property type="project" value="InterPro"/>
</dbReference>
<dbReference type="GO" id="GO:0016485">
    <property type="term" value="P:protein processing"/>
    <property type="evidence" value="ECO:0000318"/>
    <property type="project" value="GO_Central"/>
</dbReference>
<dbReference type="CDD" id="cd06067">
    <property type="entry name" value="H2MP_MemB-H2evol"/>
    <property type="match status" value="1"/>
</dbReference>
<dbReference type="FunFam" id="3.40.50.1450:FF:000005">
    <property type="entry name" value="Hydrogenase maturation protease HycI"/>
    <property type="match status" value="1"/>
</dbReference>
<dbReference type="Gene3D" id="3.40.50.1450">
    <property type="entry name" value="HybD-like"/>
    <property type="match status" value="1"/>
</dbReference>
<dbReference type="InterPro" id="IPR004420">
    <property type="entry name" value="Pept_A31_hyd_mat_HycI"/>
</dbReference>
<dbReference type="InterPro" id="IPR023430">
    <property type="entry name" value="Pept_HybD-like_dom_sf"/>
</dbReference>
<dbReference type="InterPro" id="IPR000671">
    <property type="entry name" value="Peptidase_A31"/>
</dbReference>
<dbReference type="NCBIfam" id="TIGR00142">
    <property type="entry name" value="hycI"/>
    <property type="match status" value="1"/>
</dbReference>
<dbReference type="NCBIfam" id="TIGR00072">
    <property type="entry name" value="hydrog_prot"/>
    <property type="match status" value="1"/>
</dbReference>
<dbReference type="PANTHER" id="PTHR30302">
    <property type="entry name" value="HYDROGENASE 1 MATURATION PROTEASE"/>
    <property type="match status" value="1"/>
</dbReference>
<dbReference type="PANTHER" id="PTHR30302:SF1">
    <property type="entry name" value="HYDROGENASE 2 MATURATION PROTEASE"/>
    <property type="match status" value="1"/>
</dbReference>
<dbReference type="Pfam" id="PF01750">
    <property type="entry name" value="HycI"/>
    <property type="match status" value="1"/>
</dbReference>
<dbReference type="PRINTS" id="PR00446">
    <property type="entry name" value="HYDRGNUPTAKE"/>
</dbReference>
<dbReference type="SUPFAM" id="SSF53163">
    <property type="entry name" value="HybD-like"/>
    <property type="match status" value="1"/>
</dbReference>
<keyword id="KW-0064">Aspartyl protease</keyword>
<keyword id="KW-0378">Hydrolase</keyword>
<keyword id="KW-0645">Protease</keyword>
<keyword id="KW-1185">Reference proteome</keyword>
<sequence length="169" mass="19271">MKEMLLDKLKNCKKLVIMGIGNELKGDDAVGIYVVKKLMRYFGEEKEFINIKNLYLINAGTVPDFFTDILKEIKPTHILIIDCALMDKDVGEVKIIKEDEIINYSFSTHTLPLSIIVKYLKKFINAEIIILGIQPKIIDFCPISEEVKLSGDKLVNTLIEIIEELKLAK</sequence>
<protein>
    <recommendedName>
        <fullName>Putative hydrogenase maturation protease MJ0631</fullName>
        <ecNumber>3.4.23.-</ecNumber>
    </recommendedName>
</protein>
<name>Y631_METJA</name>
<feature type="chain" id="PRO_0000201949" description="Putative hydrogenase maturation protease MJ0631">
    <location>
        <begin position="1"/>
        <end position="169"/>
    </location>
</feature>